<organism>
    <name type="scientific">Parvibaculum lavamentivorans (strain DS-1 / DSM 13023 / NCIMB 13966)</name>
    <dbReference type="NCBI Taxonomy" id="402881"/>
    <lineage>
        <taxon>Bacteria</taxon>
        <taxon>Pseudomonadati</taxon>
        <taxon>Pseudomonadota</taxon>
        <taxon>Alphaproteobacteria</taxon>
        <taxon>Hyphomicrobiales</taxon>
        <taxon>Parvibaculaceae</taxon>
        <taxon>Parvibaculum</taxon>
    </lineage>
</organism>
<accession>A7HQR4</accession>
<gene>
    <name evidence="1" type="primary">lpxK</name>
    <name type="ordered locus">Plav_0624</name>
</gene>
<name>LPXK_PARL1</name>
<dbReference type="EC" id="2.7.1.130" evidence="1"/>
<dbReference type="EMBL" id="CP000774">
    <property type="protein sequence ID" value="ABS62247.1"/>
    <property type="molecule type" value="Genomic_DNA"/>
</dbReference>
<dbReference type="RefSeq" id="WP_011995538.1">
    <property type="nucleotide sequence ID" value="NC_009719.1"/>
</dbReference>
<dbReference type="SMR" id="A7HQR4"/>
<dbReference type="STRING" id="402881.Plav_0624"/>
<dbReference type="KEGG" id="pla:Plav_0624"/>
<dbReference type="eggNOG" id="COG1663">
    <property type="taxonomic scope" value="Bacteria"/>
</dbReference>
<dbReference type="HOGENOM" id="CLU_038816_0_0_5"/>
<dbReference type="OrthoDB" id="9766423at2"/>
<dbReference type="UniPathway" id="UPA00359">
    <property type="reaction ID" value="UER00482"/>
</dbReference>
<dbReference type="Proteomes" id="UP000006377">
    <property type="component" value="Chromosome"/>
</dbReference>
<dbReference type="GO" id="GO:0005886">
    <property type="term" value="C:plasma membrane"/>
    <property type="evidence" value="ECO:0007669"/>
    <property type="project" value="TreeGrafter"/>
</dbReference>
<dbReference type="GO" id="GO:0005524">
    <property type="term" value="F:ATP binding"/>
    <property type="evidence" value="ECO:0007669"/>
    <property type="project" value="UniProtKB-UniRule"/>
</dbReference>
<dbReference type="GO" id="GO:0009029">
    <property type="term" value="F:tetraacyldisaccharide 4'-kinase activity"/>
    <property type="evidence" value="ECO:0007669"/>
    <property type="project" value="UniProtKB-UniRule"/>
</dbReference>
<dbReference type="GO" id="GO:0009245">
    <property type="term" value="P:lipid A biosynthetic process"/>
    <property type="evidence" value="ECO:0007669"/>
    <property type="project" value="UniProtKB-UniRule"/>
</dbReference>
<dbReference type="GO" id="GO:0009244">
    <property type="term" value="P:lipopolysaccharide core region biosynthetic process"/>
    <property type="evidence" value="ECO:0007669"/>
    <property type="project" value="TreeGrafter"/>
</dbReference>
<dbReference type="HAMAP" id="MF_00409">
    <property type="entry name" value="LpxK"/>
    <property type="match status" value="1"/>
</dbReference>
<dbReference type="InterPro" id="IPR003758">
    <property type="entry name" value="LpxK"/>
</dbReference>
<dbReference type="InterPro" id="IPR027417">
    <property type="entry name" value="P-loop_NTPase"/>
</dbReference>
<dbReference type="NCBIfam" id="TIGR00682">
    <property type="entry name" value="lpxK"/>
    <property type="match status" value="1"/>
</dbReference>
<dbReference type="PANTHER" id="PTHR42724">
    <property type="entry name" value="TETRAACYLDISACCHARIDE 4'-KINASE"/>
    <property type="match status" value="1"/>
</dbReference>
<dbReference type="PANTHER" id="PTHR42724:SF1">
    <property type="entry name" value="TETRAACYLDISACCHARIDE 4'-KINASE, MITOCHONDRIAL-RELATED"/>
    <property type="match status" value="1"/>
</dbReference>
<dbReference type="Pfam" id="PF02606">
    <property type="entry name" value="LpxK"/>
    <property type="match status" value="1"/>
</dbReference>
<dbReference type="SUPFAM" id="SSF52540">
    <property type="entry name" value="P-loop containing nucleoside triphosphate hydrolases"/>
    <property type="match status" value="1"/>
</dbReference>
<proteinExistence type="inferred from homology"/>
<reference key="1">
    <citation type="journal article" date="2011" name="Stand. Genomic Sci.">
        <title>Complete genome sequence of Parvibaculum lavamentivorans type strain (DS-1(T)).</title>
        <authorList>
            <person name="Schleheck D."/>
            <person name="Weiss M."/>
            <person name="Pitluck S."/>
            <person name="Bruce D."/>
            <person name="Land M.L."/>
            <person name="Han S."/>
            <person name="Saunders E."/>
            <person name="Tapia R."/>
            <person name="Detter C."/>
            <person name="Brettin T."/>
            <person name="Han J."/>
            <person name="Woyke T."/>
            <person name="Goodwin L."/>
            <person name="Pennacchio L."/>
            <person name="Nolan M."/>
            <person name="Cook A.M."/>
            <person name="Kjelleberg S."/>
            <person name="Thomas T."/>
        </authorList>
    </citation>
    <scope>NUCLEOTIDE SEQUENCE [LARGE SCALE GENOMIC DNA]</scope>
    <source>
        <strain>DS-1 / DSM 13023 / NCIMB 13966</strain>
    </source>
</reference>
<feature type="chain" id="PRO_0000340844" description="Tetraacyldisaccharide 4'-kinase">
    <location>
        <begin position="1"/>
        <end position="342"/>
    </location>
</feature>
<feature type="binding site" evidence="1">
    <location>
        <begin position="56"/>
        <end position="63"/>
    </location>
    <ligand>
        <name>ATP</name>
        <dbReference type="ChEBI" id="CHEBI:30616"/>
    </ligand>
</feature>
<comment type="function">
    <text evidence="1">Transfers the gamma-phosphate of ATP to the 4'-position of a tetraacyldisaccharide 1-phosphate intermediate (termed DS-1-P) to form tetraacyldisaccharide 1,4'-bis-phosphate (lipid IVA).</text>
</comment>
<comment type="catalytic activity">
    <reaction evidence="1">
        <text>a lipid A disaccharide + ATP = a lipid IVA + ADP + H(+)</text>
        <dbReference type="Rhea" id="RHEA:67840"/>
        <dbReference type="ChEBI" id="CHEBI:15378"/>
        <dbReference type="ChEBI" id="CHEBI:30616"/>
        <dbReference type="ChEBI" id="CHEBI:176343"/>
        <dbReference type="ChEBI" id="CHEBI:176425"/>
        <dbReference type="ChEBI" id="CHEBI:456216"/>
        <dbReference type="EC" id="2.7.1.130"/>
    </reaction>
</comment>
<comment type="pathway">
    <text evidence="1">Glycolipid biosynthesis; lipid IV(A) biosynthesis; lipid IV(A) from (3R)-3-hydroxytetradecanoyl-[acyl-carrier-protein] and UDP-N-acetyl-alpha-D-glucosamine: step 6/6.</text>
</comment>
<comment type="similarity">
    <text evidence="1">Belongs to the LpxK family.</text>
</comment>
<sequence>MREPRFWYPAQRNSVPLAARLLAPLGYVYGLAGRIRRGRAEPQRAAVPVICVGNLTAGGAGKTPVALTLAEGLIAKGEKVHFLTRGYGGREQGPIRVDPLRHAAADVGDEPLLLAAAAPTWVAANRSEGAAAAVRGGAGLIIMDDGFQNPGLAKDFSILVVDAASGVGNGRLVPAGPLRERVDDALSRANALILTGRGHAGDGIAARARARGIPVFNSIVRPAVAPDFGAGPFLAFAGIGRPEKFYRTLRELGAELAETISFPDHHMFSESEALKLLVRARELGARLITTEKDAARLSHAPVSSARWRLDEAALRLPVRALIGDFPSLMAQIDDAVSRARRR</sequence>
<keyword id="KW-0067">ATP-binding</keyword>
<keyword id="KW-0418">Kinase</keyword>
<keyword id="KW-0441">Lipid A biosynthesis</keyword>
<keyword id="KW-0444">Lipid biosynthesis</keyword>
<keyword id="KW-0443">Lipid metabolism</keyword>
<keyword id="KW-0547">Nucleotide-binding</keyword>
<keyword id="KW-1185">Reference proteome</keyword>
<keyword id="KW-0808">Transferase</keyword>
<protein>
    <recommendedName>
        <fullName evidence="1">Tetraacyldisaccharide 4'-kinase</fullName>
        <ecNumber evidence="1">2.7.1.130</ecNumber>
    </recommendedName>
    <alternativeName>
        <fullName evidence="1">Lipid A 4'-kinase</fullName>
    </alternativeName>
</protein>
<evidence type="ECO:0000255" key="1">
    <source>
        <dbReference type="HAMAP-Rule" id="MF_00409"/>
    </source>
</evidence>